<keyword id="KW-0131">Cell cycle</keyword>
<keyword id="KW-0132">Cell division</keyword>
<keyword id="KW-0963">Cytoplasm</keyword>
<keyword id="KW-1185">Reference proteome</keyword>
<keyword id="KW-0717">Septation</keyword>
<organism>
    <name type="scientific">Streptococcus agalactiae serotype V (strain ATCC BAA-611 / 2603 V/R)</name>
    <dbReference type="NCBI Taxonomy" id="208435"/>
    <lineage>
        <taxon>Bacteria</taxon>
        <taxon>Bacillati</taxon>
        <taxon>Bacillota</taxon>
        <taxon>Bacilli</taxon>
        <taxon>Lactobacillales</taxon>
        <taxon>Streptococcaceae</taxon>
        <taxon>Streptococcus</taxon>
    </lineage>
</organism>
<reference key="1">
    <citation type="journal article" date="2002" name="Proc. Natl. Acad. Sci. U.S.A.">
        <title>Complete genome sequence and comparative genomic analysis of an emerging human pathogen, serotype V Streptococcus agalactiae.</title>
        <authorList>
            <person name="Tettelin H."/>
            <person name="Masignani V."/>
            <person name="Cieslewicz M.J."/>
            <person name="Eisen J.A."/>
            <person name="Peterson S.N."/>
            <person name="Wessels M.R."/>
            <person name="Paulsen I.T."/>
            <person name="Nelson K.E."/>
            <person name="Margarit I."/>
            <person name="Read T.D."/>
            <person name="Madoff L.C."/>
            <person name="Wolf A.M."/>
            <person name="Beanan M.J."/>
            <person name="Brinkac L.M."/>
            <person name="Daugherty S.C."/>
            <person name="DeBoy R.T."/>
            <person name="Durkin A.S."/>
            <person name="Kolonay J.F."/>
            <person name="Madupu R."/>
            <person name="Lewis M.R."/>
            <person name="Radune D."/>
            <person name="Fedorova N.B."/>
            <person name="Scanlan D."/>
            <person name="Khouri H.M."/>
            <person name="Mulligan S."/>
            <person name="Carty H.A."/>
            <person name="Cline R.T."/>
            <person name="Van Aken S.E."/>
            <person name="Gill J."/>
            <person name="Scarselli M."/>
            <person name="Mora M."/>
            <person name="Iacobini E.T."/>
            <person name="Brettoni C."/>
            <person name="Galli G."/>
            <person name="Mariani M."/>
            <person name="Vegni F."/>
            <person name="Maione D."/>
            <person name="Rinaudo D."/>
            <person name="Rappuoli R."/>
            <person name="Telford J.L."/>
            <person name="Kasper D.L."/>
            <person name="Grandi G."/>
            <person name="Fraser C.M."/>
        </authorList>
    </citation>
    <scope>NUCLEOTIDE SEQUENCE [LARGE SCALE GENOMIC DNA]</scope>
    <source>
        <strain>ATCC BAA-611 / 2603 V/R</strain>
    </source>
</reference>
<protein>
    <recommendedName>
        <fullName evidence="1">Cell division protein SepF</fullName>
    </recommendedName>
</protein>
<sequence length="201" mass="23463">MALKDRFDKIISYFDTDDVSENEVHEVQERTSVQRDSRAATAQEASQRSHMTNSAEEEMIGSRPRTYTYDPNRQERQRVQRDNAYQQATPRVQNKDSVRQQREQVTIALKYPRKYEDAQEIVDLLIVNECVLIDFQYMLDAQARRCLDYIDGASRVLYGSLQKVGSSMFLLTPANVMVDIEEMNIPKTGQETSFDFDMKRR</sequence>
<feature type="chain" id="PRO_0000334093" description="Cell division protein SepF">
    <location>
        <begin position="1"/>
        <end position="201"/>
    </location>
</feature>
<feature type="region of interest" description="Disordered" evidence="2">
    <location>
        <begin position="27"/>
        <end position="99"/>
    </location>
</feature>
<feature type="compositionally biased region" description="Basic and acidic residues" evidence="2">
    <location>
        <begin position="27"/>
        <end position="38"/>
    </location>
</feature>
<feature type="compositionally biased region" description="Polar residues" evidence="2">
    <location>
        <begin position="43"/>
        <end position="54"/>
    </location>
</feature>
<feature type="compositionally biased region" description="Basic and acidic residues" evidence="2">
    <location>
        <begin position="72"/>
        <end position="81"/>
    </location>
</feature>
<feature type="compositionally biased region" description="Polar residues" evidence="2">
    <location>
        <begin position="83"/>
        <end position="92"/>
    </location>
</feature>
<name>SEPF_STRA5</name>
<comment type="function">
    <text evidence="1">Cell division protein that is part of the divisome complex and is recruited early to the Z-ring. Probably stimulates Z-ring formation, perhaps through the cross-linking of FtsZ protofilaments. Its function overlaps with FtsA.</text>
</comment>
<comment type="subunit">
    <text evidence="1">Homodimer. Interacts with FtsZ.</text>
</comment>
<comment type="subcellular location">
    <subcellularLocation>
        <location evidence="1">Cytoplasm</location>
    </subcellularLocation>
    <text evidence="1">Localizes to the division site, in a FtsZ-dependent manner.</text>
</comment>
<comment type="similarity">
    <text evidence="1">Belongs to the SepF family.</text>
</comment>
<accession>Q8E181</accession>
<proteinExistence type="inferred from homology"/>
<gene>
    <name evidence="1" type="primary">sepF</name>
    <name type="ordered locus">SAG0481</name>
</gene>
<dbReference type="EMBL" id="AE009948">
    <property type="protein sequence ID" value="AAM99383.1"/>
    <property type="molecule type" value="Genomic_DNA"/>
</dbReference>
<dbReference type="RefSeq" id="NP_687511.1">
    <property type="nucleotide sequence ID" value="NC_004116.1"/>
</dbReference>
<dbReference type="RefSeq" id="WP_001185366.1">
    <property type="nucleotide sequence ID" value="NC_004116.1"/>
</dbReference>
<dbReference type="SMR" id="Q8E181"/>
<dbReference type="STRING" id="208435.SAG0481"/>
<dbReference type="KEGG" id="sag:SAG0481"/>
<dbReference type="PATRIC" id="fig|208435.3.peg.479"/>
<dbReference type="HOGENOM" id="CLU_078499_2_0_9"/>
<dbReference type="OrthoDB" id="9815206at2"/>
<dbReference type="Proteomes" id="UP000000821">
    <property type="component" value="Chromosome"/>
</dbReference>
<dbReference type="GO" id="GO:0005737">
    <property type="term" value="C:cytoplasm"/>
    <property type="evidence" value="ECO:0007669"/>
    <property type="project" value="UniProtKB-SubCell"/>
</dbReference>
<dbReference type="GO" id="GO:0000917">
    <property type="term" value="P:division septum assembly"/>
    <property type="evidence" value="ECO:0007669"/>
    <property type="project" value="UniProtKB-KW"/>
</dbReference>
<dbReference type="GO" id="GO:0043093">
    <property type="term" value="P:FtsZ-dependent cytokinesis"/>
    <property type="evidence" value="ECO:0007669"/>
    <property type="project" value="UniProtKB-UniRule"/>
</dbReference>
<dbReference type="Gene3D" id="3.30.110.150">
    <property type="entry name" value="SepF-like protein"/>
    <property type="match status" value="1"/>
</dbReference>
<dbReference type="HAMAP" id="MF_01197">
    <property type="entry name" value="SepF"/>
    <property type="match status" value="1"/>
</dbReference>
<dbReference type="InterPro" id="IPR023052">
    <property type="entry name" value="Cell_div_SepF"/>
</dbReference>
<dbReference type="InterPro" id="IPR007561">
    <property type="entry name" value="Cell_div_SepF/SepF-rel"/>
</dbReference>
<dbReference type="InterPro" id="IPR038594">
    <property type="entry name" value="SepF-like_sf"/>
</dbReference>
<dbReference type="PANTHER" id="PTHR35798">
    <property type="entry name" value="CELL DIVISION PROTEIN SEPF"/>
    <property type="match status" value="1"/>
</dbReference>
<dbReference type="PANTHER" id="PTHR35798:SF1">
    <property type="entry name" value="CELL DIVISION PROTEIN SEPF"/>
    <property type="match status" value="1"/>
</dbReference>
<dbReference type="Pfam" id="PF04472">
    <property type="entry name" value="SepF"/>
    <property type="match status" value="1"/>
</dbReference>
<evidence type="ECO:0000255" key="1">
    <source>
        <dbReference type="HAMAP-Rule" id="MF_01197"/>
    </source>
</evidence>
<evidence type="ECO:0000256" key="2">
    <source>
        <dbReference type="SAM" id="MobiDB-lite"/>
    </source>
</evidence>